<gene>
    <name evidence="1" type="primary">sfsA</name>
    <name type="ordered locus">BAbS19_I12120</name>
</gene>
<accession>B2S6B8</accession>
<feature type="chain" id="PRO_1000093566" description="Sugar fermentation stimulation protein homolog">
    <location>
        <begin position="1"/>
        <end position="238"/>
    </location>
</feature>
<evidence type="ECO:0000255" key="1">
    <source>
        <dbReference type="HAMAP-Rule" id="MF_00095"/>
    </source>
</evidence>
<comment type="similarity">
    <text evidence="1">Belongs to the SfsA family.</text>
</comment>
<sequence>MLFPTPLISGRLERRYKRFLADVTLDDGRFITASVPNTGSMLGLTAPGSRVWLSFSDAPHRKYAHTLQIVEADNTLVGVNTGLPNRIAEEAILKGLIPDLDGYATLKREQKYGRNSRIDLLLDDGPRPRAYVEVKNVHFIRTPGLAEFPDTVTARGAKHLDELVDVVAAGHRGIMLFIIQRADCSRFGISGDLDPFYARAFERAIASGVEAWAVRCHITENGIDATELVPIEDMRRIE</sequence>
<name>SFSA_BRUA1</name>
<organism>
    <name type="scientific">Brucella abortus (strain S19)</name>
    <dbReference type="NCBI Taxonomy" id="430066"/>
    <lineage>
        <taxon>Bacteria</taxon>
        <taxon>Pseudomonadati</taxon>
        <taxon>Pseudomonadota</taxon>
        <taxon>Alphaproteobacteria</taxon>
        <taxon>Hyphomicrobiales</taxon>
        <taxon>Brucellaceae</taxon>
        <taxon>Brucella/Ochrobactrum group</taxon>
        <taxon>Brucella</taxon>
    </lineage>
</organism>
<reference key="1">
    <citation type="journal article" date="2008" name="PLoS ONE">
        <title>Genome sequence of Brucella abortus vaccine strain S19 compared to virulent strains yields candidate virulence genes.</title>
        <authorList>
            <person name="Crasta O.R."/>
            <person name="Folkerts O."/>
            <person name="Fei Z."/>
            <person name="Mane S.P."/>
            <person name="Evans C."/>
            <person name="Martino-Catt S."/>
            <person name="Bricker B."/>
            <person name="Yu G."/>
            <person name="Du L."/>
            <person name="Sobral B.W."/>
        </authorList>
    </citation>
    <scope>NUCLEOTIDE SEQUENCE [LARGE SCALE GENOMIC DNA]</scope>
    <source>
        <strain>S19</strain>
    </source>
</reference>
<protein>
    <recommendedName>
        <fullName evidence="1">Sugar fermentation stimulation protein homolog</fullName>
    </recommendedName>
</protein>
<dbReference type="EMBL" id="CP000887">
    <property type="protein sequence ID" value="ACD72715.1"/>
    <property type="molecule type" value="Genomic_DNA"/>
</dbReference>
<dbReference type="RefSeq" id="WP_002964399.1">
    <property type="nucleotide sequence ID" value="NC_010742.1"/>
</dbReference>
<dbReference type="SMR" id="B2S6B8"/>
<dbReference type="GeneID" id="97533485"/>
<dbReference type="KEGG" id="bmc:BAbS19_I12120"/>
<dbReference type="HOGENOM" id="CLU_052299_2_0_5"/>
<dbReference type="Proteomes" id="UP000002565">
    <property type="component" value="Chromosome 1"/>
</dbReference>
<dbReference type="GO" id="GO:0003677">
    <property type="term" value="F:DNA binding"/>
    <property type="evidence" value="ECO:0007669"/>
    <property type="project" value="InterPro"/>
</dbReference>
<dbReference type="CDD" id="cd22359">
    <property type="entry name" value="SfsA-like_bacterial"/>
    <property type="match status" value="1"/>
</dbReference>
<dbReference type="Gene3D" id="2.40.50.580">
    <property type="match status" value="1"/>
</dbReference>
<dbReference type="Gene3D" id="3.40.1350.60">
    <property type="match status" value="1"/>
</dbReference>
<dbReference type="HAMAP" id="MF_00095">
    <property type="entry name" value="SfsA"/>
    <property type="match status" value="1"/>
</dbReference>
<dbReference type="InterPro" id="IPR005224">
    <property type="entry name" value="SfsA"/>
</dbReference>
<dbReference type="InterPro" id="IPR040452">
    <property type="entry name" value="SfsA_C"/>
</dbReference>
<dbReference type="InterPro" id="IPR041465">
    <property type="entry name" value="SfsA_N"/>
</dbReference>
<dbReference type="NCBIfam" id="TIGR00230">
    <property type="entry name" value="sfsA"/>
    <property type="match status" value="1"/>
</dbReference>
<dbReference type="PANTHER" id="PTHR30545">
    <property type="entry name" value="SUGAR FERMENTATION STIMULATION PROTEIN A"/>
    <property type="match status" value="1"/>
</dbReference>
<dbReference type="PANTHER" id="PTHR30545:SF2">
    <property type="entry name" value="SUGAR FERMENTATION STIMULATION PROTEIN A"/>
    <property type="match status" value="1"/>
</dbReference>
<dbReference type="Pfam" id="PF03749">
    <property type="entry name" value="SfsA"/>
    <property type="match status" value="1"/>
</dbReference>
<dbReference type="Pfam" id="PF17746">
    <property type="entry name" value="SfsA_N"/>
    <property type="match status" value="1"/>
</dbReference>
<proteinExistence type="inferred from homology"/>